<evidence type="ECO:0000250" key="1"/>
<evidence type="ECO:0000255" key="2">
    <source>
        <dbReference type="HAMAP-Rule" id="MF_00047"/>
    </source>
</evidence>
<dbReference type="EC" id="6.3.2.4" evidence="2"/>
<dbReference type="EMBL" id="CP000096">
    <property type="protein sequence ID" value="ABB24190.1"/>
    <property type="molecule type" value="Genomic_DNA"/>
</dbReference>
<dbReference type="RefSeq" id="WP_011358062.1">
    <property type="nucleotide sequence ID" value="NC_007512.1"/>
</dbReference>
<dbReference type="SMR" id="Q3B391"/>
<dbReference type="STRING" id="319225.Plut_1331"/>
<dbReference type="KEGG" id="plt:Plut_1331"/>
<dbReference type="eggNOG" id="COG1181">
    <property type="taxonomic scope" value="Bacteria"/>
</dbReference>
<dbReference type="HOGENOM" id="CLU_039268_0_0_10"/>
<dbReference type="OrthoDB" id="9813261at2"/>
<dbReference type="UniPathway" id="UPA00219"/>
<dbReference type="Proteomes" id="UP000002709">
    <property type="component" value="Chromosome"/>
</dbReference>
<dbReference type="GO" id="GO:0005829">
    <property type="term" value="C:cytosol"/>
    <property type="evidence" value="ECO:0007669"/>
    <property type="project" value="TreeGrafter"/>
</dbReference>
<dbReference type="GO" id="GO:0005524">
    <property type="term" value="F:ATP binding"/>
    <property type="evidence" value="ECO:0007669"/>
    <property type="project" value="UniProtKB-KW"/>
</dbReference>
<dbReference type="GO" id="GO:0008716">
    <property type="term" value="F:D-alanine-D-alanine ligase activity"/>
    <property type="evidence" value="ECO:0007669"/>
    <property type="project" value="UniProtKB-UniRule"/>
</dbReference>
<dbReference type="GO" id="GO:0046872">
    <property type="term" value="F:metal ion binding"/>
    <property type="evidence" value="ECO:0007669"/>
    <property type="project" value="UniProtKB-KW"/>
</dbReference>
<dbReference type="GO" id="GO:0071555">
    <property type="term" value="P:cell wall organization"/>
    <property type="evidence" value="ECO:0007669"/>
    <property type="project" value="UniProtKB-KW"/>
</dbReference>
<dbReference type="GO" id="GO:0009252">
    <property type="term" value="P:peptidoglycan biosynthetic process"/>
    <property type="evidence" value="ECO:0007669"/>
    <property type="project" value="UniProtKB-UniRule"/>
</dbReference>
<dbReference type="GO" id="GO:0008360">
    <property type="term" value="P:regulation of cell shape"/>
    <property type="evidence" value="ECO:0007669"/>
    <property type="project" value="UniProtKB-KW"/>
</dbReference>
<dbReference type="FunFam" id="3.30.470.20:FF:000008">
    <property type="entry name" value="D-alanine--D-alanine ligase"/>
    <property type="match status" value="1"/>
</dbReference>
<dbReference type="Gene3D" id="3.40.50.20">
    <property type="match status" value="1"/>
</dbReference>
<dbReference type="Gene3D" id="3.30.1490.20">
    <property type="entry name" value="ATP-grasp fold, A domain"/>
    <property type="match status" value="1"/>
</dbReference>
<dbReference type="Gene3D" id="3.30.470.20">
    <property type="entry name" value="ATP-grasp fold, B domain"/>
    <property type="match status" value="1"/>
</dbReference>
<dbReference type="HAMAP" id="MF_00047">
    <property type="entry name" value="Dala_Dala_lig"/>
    <property type="match status" value="1"/>
</dbReference>
<dbReference type="InterPro" id="IPR011761">
    <property type="entry name" value="ATP-grasp"/>
</dbReference>
<dbReference type="InterPro" id="IPR013815">
    <property type="entry name" value="ATP_grasp_subdomain_1"/>
</dbReference>
<dbReference type="InterPro" id="IPR000291">
    <property type="entry name" value="D-Ala_lig_Van_CS"/>
</dbReference>
<dbReference type="InterPro" id="IPR005905">
    <property type="entry name" value="D_ala_D_ala"/>
</dbReference>
<dbReference type="InterPro" id="IPR011095">
    <property type="entry name" value="Dala_Dala_lig_C"/>
</dbReference>
<dbReference type="InterPro" id="IPR011127">
    <property type="entry name" value="Dala_Dala_lig_N"/>
</dbReference>
<dbReference type="InterPro" id="IPR016185">
    <property type="entry name" value="PreATP-grasp_dom_sf"/>
</dbReference>
<dbReference type="NCBIfam" id="TIGR01205">
    <property type="entry name" value="D_ala_D_alaTIGR"/>
    <property type="match status" value="1"/>
</dbReference>
<dbReference type="NCBIfam" id="NF002378">
    <property type="entry name" value="PRK01372.1"/>
    <property type="match status" value="1"/>
</dbReference>
<dbReference type="NCBIfam" id="NF002528">
    <property type="entry name" value="PRK01966.1-4"/>
    <property type="match status" value="1"/>
</dbReference>
<dbReference type="PANTHER" id="PTHR23132">
    <property type="entry name" value="D-ALANINE--D-ALANINE LIGASE"/>
    <property type="match status" value="1"/>
</dbReference>
<dbReference type="PANTHER" id="PTHR23132:SF25">
    <property type="entry name" value="D-ALANINE--D-ALANINE LIGASE A"/>
    <property type="match status" value="1"/>
</dbReference>
<dbReference type="Pfam" id="PF07478">
    <property type="entry name" value="Dala_Dala_lig_C"/>
    <property type="match status" value="1"/>
</dbReference>
<dbReference type="Pfam" id="PF01820">
    <property type="entry name" value="Dala_Dala_lig_N"/>
    <property type="match status" value="1"/>
</dbReference>
<dbReference type="PIRSF" id="PIRSF039102">
    <property type="entry name" value="Ddl/VanB"/>
    <property type="match status" value="1"/>
</dbReference>
<dbReference type="SUPFAM" id="SSF56059">
    <property type="entry name" value="Glutathione synthetase ATP-binding domain-like"/>
    <property type="match status" value="1"/>
</dbReference>
<dbReference type="SUPFAM" id="SSF52440">
    <property type="entry name" value="PreATP-grasp domain"/>
    <property type="match status" value="1"/>
</dbReference>
<dbReference type="PROSITE" id="PS50975">
    <property type="entry name" value="ATP_GRASP"/>
    <property type="match status" value="1"/>
</dbReference>
<dbReference type="PROSITE" id="PS00843">
    <property type="entry name" value="DALA_DALA_LIGASE_1"/>
    <property type="match status" value="1"/>
</dbReference>
<dbReference type="PROSITE" id="PS00844">
    <property type="entry name" value="DALA_DALA_LIGASE_2"/>
    <property type="match status" value="1"/>
</dbReference>
<reference key="1">
    <citation type="submission" date="2005-08" db="EMBL/GenBank/DDBJ databases">
        <title>Complete sequence of Pelodictyon luteolum DSM 273.</title>
        <authorList>
            <consortium name="US DOE Joint Genome Institute"/>
            <person name="Copeland A."/>
            <person name="Lucas S."/>
            <person name="Lapidus A."/>
            <person name="Barry K."/>
            <person name="Detter J.C."/>
            <person name="Glavina T."/>
            <person name="Hammon N."/>
            <person name="Israni S."/>
            <person name="Pitluck S."/>
            <person name="Bryant D."/>
            <person name="Schmutz J."/>
            <person name="Larimer F."/>
            <person name="Land M."/>
            <person name="Kyrpides N."/>
            <person name="Ivanova N."/>
            <person name="Richardson P."/>
        </authorList>
    </citation>
    <scope>NUCLEOTIDE SEQUENCE [LARGE SCALE GENOMIC DNA]</scope>
    <source>
        <strain>DSM 273 / BCRC 81028 / 2530</strain>
    </source>
</reference>
<gene>
    <name evidence="2" type="primary">ddl</name>
    <name type="ordered locus">Plut_1331</name>
</gene>
<protein>
    <recommendedName>
        <fullName evidence="2">D-alanine--D-alanine ligase</fullName>
        <ecNumber evidence="2">6.3.2.4</ecNumber>
    </recommendedName>
    <alternativeName>
        <fullName evidence="2">D-Ala-D-Ala ligase</fullName>
    </alternativeName>
    <alternativeName>
        <fullName evidence="2">D-alanylalanine synthetase</fullName>
    </alternativeName>
</protein>
<keyword id="KW-0067">ATP-binding</keyword>
<keyword id="KW-0133">Cell shape</keyword>
<keyword id="KW-0961">Cell wall biogenesis/degradation</keyword>
<keyword id="KW-0963">Cytoplasm</keyword>
<keyword id="KW-0436">Ligase</keyword>
<keyword id="KW-0460">Magnesium</keyword>
<keyword id="KW-0464">Manganese</keyword>
<keyword id="KW-0479">Metal-binding</keyword>
<keyword id="KW-0547">Nucleotide-binding</keyword>
<keyword id="KW-0573">Peptidoglycan synthesis</keyword>
<keyword id="KW-1185">Reference proteome</keyword>
<proteinExistence type="inferred from homology"/>
<comment type="function">
    <text evidence="2">Cell wall formation.</text>
</comment>
<comment type="catalytic activity">
    <reaction evidence="2">
        <text>2 D-alanine + ATP = D-alanyl-D-alanine + ADP + phosphate + H(+)</text>
        <dbReference type="Rhea" id="RHEA:11224"/>
        <dbReference type="ChEBI" id="CHEBI:15378"/>
        <dbReference type="ChEBI" id="CHEBI:30616"/>
        <dbReference type="ChEBI" id="CHEBI:43474"/>
        <dbReference type="ChEBI" id="CHEBI:57416"/>
        <dbReference type="ChEBI" id="CHEBI:57822"/>
        <dbReference type="ChEBI" id="CHEBI:456216"/>
        <dbReference type="EC" id="6.3.2.4"/>
    </reaction>
</comment>
<comment type="cofactor">
    <cofactor evidence="1">
        <name>Mg(2+)</name>
        <dbReference type="ChEBI" id="CHEBI:18420"/>
    </cofactor>
    <cofactor evidence="1">
        <name>Mn(2+)</name>
        <dbReference type="ChEBI" id="CHEBI:29035"/>
    </cofactor>
    <text evidence="1">Binds 2 magnesium or manganese ions per subunit.</text>
</comment>
<comment type="pathway">
    <text evidence="2">Cell wall biogenesis; peptidoglycan biosynthesis.</text>
</comment>
<comment type="subcellular location">
    <subcellularLocation>
        <location evidence="2">Cytoplasm</location>
    </subcellularLocation>
</comment>
<comment type="similarity">
    <text evidence="2">Belongs to the D-alanine--D-alanine ligase family.</text>
</comment>
<organism>
    <name type="scientific">Chlorobium luteolum (strain DSM 273 / BCRC 81028 / 2530)</name>
    <name type="common">Pelodictyon luteolum</name>
    <dbReference type="NCBI Taxonomy" id="319225"/>
    <lineage>
        <taxon>Bacteria</taxon>
        <taxon>Pseudomonadati</taxon>
        <taxon>Chlorobiota</taxon>
        <taxon>Chlorobiia</taxon>
        <taxon>Chlorobiales</taxon>
        <taxon>Chlorobiaceae</taxon>
        <taxon>Chlorobium/Pelodictyon group</taxon>
        <taxon>Pelodictyon</taxon>
    </lineage>
</organism>
<sequence length="361" mass="38707">MHHTTVALLFGGRSLEHEISVISARAVAANIDRDRYRVLAVYITRDGGWYAGGVAEQILKLDIADLIRTTSLEATAATLREMVAASAEPPFNFDFRGIDVAFPVLHGSYGEDGRVQGLLETLQVPCTGCGVLASALTMDKALTKLAAADAGLAVAVSVTVMSHAYRRDPEATHRLAVASLSFPMFVKPVSLGSSVGITKVNSESELAEAITHACSLDSKVLIEQAVKGREVEVAVIGNDTLEASPCGEIEPGSEFYDYEDKYIHDTAKLFIPARIPGDLQEKVREAALCAYRALGCRGMSRVDFFVDETTGSIVFNEINTIPGFTPVSMYPRLMAAAGTGFMELTDRLIRLAMEPEAGASA</sequence>
<name>DDL_CHLL3</name>
<feature type="chain" id="PRO_1000030477" description="D-alanine--D-alanine ligase">
    <location>
        <begin position="1"/>
        <end position="361"/>
    </location>
</feature>
<feature type="domain" description="ATP-grasp" evidence="2">
    <location>
        <begin position="144"/>
        <end position="350"/>
    </location>
</feature>
<feature type="binding site" evidence="2">
    <location>
        <begin position="177"/>
        <end position="232"/>
    </location>
    <ligand>
        <name>ATP</name>
        <dbReference type="ChEBI" id="CHEBI:30616"/>
    </ligand>
</feature>
<feature type="binding site" evidence="2">
    <location>
        <position position="303"/>
    </location>
    <ligand>
        <name>Mg(2+)</name>
        <dbReference type="ChEBI" id="CHEBI:18420"/>
        <label>1</label>
    </ligand>
</feature>
<feature type="binding site" evidence="2">
    <location>
        <position position="317"/>
    </location>
    <ligand>
        <name>Mg(2+)</name>
        <dbReference type="ChEBI" id="CHEBI:18420"/>
        <label>1</label>
    </ligand>
</feature>
<feature type="binding site" evidence="2">
    <location>
        <position position="317"/>
    </location>
    <ligand>
        <name>Mg(2+)</name>
        <dbReference type="ChEBI" id="CHEBI:18420"/>
        <label>2</label>
    </ligand>
</feature>
<feature type="binding site" evidence="2">
    <location>
        <position position="319"/>
    </location>
    <ligand>
        <name>Mg(2+)</name>
        <dbReference type="ChEBI" id="CHEBI:18420"/>
        <label>2</label>
    </ligand>
</feature>
<accession>Q3B391</accession>